<accession>Q1AT82</accession>
<organism>
    <name type="scientific">Rubrobacter xylanophilus (strain DSM 9941 / JCM 11954 / NBRC 16129 / PRD-1)</name>
    <dbReference type="NCBI Taxonomy" id="266117"/>
    <lineage>
        <taxon>Bacteria</taxon>
        <taxon>Bacillati</taxon>
        <taxon>Actinomycetota</taxon>
        <taxon>Rubrobacteria</taxon>
        <taxon>Rubrobacterales</taxon>
        <taxon>Rubrobacteraceae</taxon>
        <taxon>Rubrobacter</taxon>
    </lineage>
</organism>
<proteinExistence type="inferred from homology"/>
<protein>
    <recommendedName>
        <fullName evidence="1">Pantothenate synthetase</fullName>
        <shortName evidence="1">PS</shortName>
        <ecNumber evidence="1">6.3.2.1</ecNumber>
    </recommendedName>
    <alternativeName>
        <fullName evidence="1">Pantoate--beta-alanine ligase</fullName>
    </alternativeName>
    <alternativeName>
        <fullName evidence="1">Pantoate-activating enzyme</fullName>
    </alternativeName>
</protein>
<gene>
    <name evidence="1" type="primary">panC</name>
    <name type="ordered locus">Rxyl_2469</name>
</gene>
<reference key="1">
    <citation type="submission" date="2006-06" db="EMBL/GenBank/DDBJ databases">
        <title>Complete sequence of Rubrobacter xylanophilus DSM 9941.</title>
        <authorList>
            <consortium name="US DOE Joint Genome Institute"/>
            <person name="Copeland A."/>
            <person name="Lucas S."/>
            <person name="Lapidus A."/>
            <person name="Barry K."/>
            <person name="Detter J.C."/>
            <person name="Glavina del Rio T."/>
            <person name="Hammon N."/>
            <person name="Israni S."/>
            <person name="Dalin E."/>
            <person name="Tice H."/>
            <person name="Pitluck S."/>
            <person name="Munk A.C."/>
            <person name="Brettin T."/>
            <person name="Bruce D."/>
            <person name="Han C."/>
            <person name="Tapia R."/>
            <person name="Gilna P."/>
            <person name="Schmutz J."/>
            <person name="Larimer F."/>
            <person name="Land M."/>
            <person name="Hauser L."/>
            <person name="Kyrpides N."/>
            <person name="Lykidis A."/>
            <person name="da Costa M.S."/>
            <person name="Rainey F.A."/>
            <person name="Empadinhas N."/>
            <person name="Jolivet E."/>
            <person name="Battista J.R."/>
            <person name="Richardson P."/>
        </authorList>
    </citation>
    <scope>NUCLEOTIDE SEQUENCE [LARGE SCALE GENOMIC DNA]</scope>
    <source>
        <strain>DSM 9941 / JCM 11954 / NBRC 16129 / PRD-1</strain>
    </source>
</reference>
<evidence type="ECO:0000255" key="1">
    <source>
        <dbReference type="HAMAP-Rule" id="MF_00158"/>
    </source>
</evidence>
<sequence>MSPATLLRSPREVRELSRRWRGEGAVVGLVPTMGALHEGHLSLVRRAWEECGRVIVSVFVNPTQFGEGEDFERYPRDLEGDRRLLAEAGCDAVFAPAVEDMYGGGTTDLASGERIFVEAGRLGELWEGEERPGHFRGVCTVVAMLFNAAEPHRAYFGEKDYQQLKVIQKMARDLLFGVEIVPCPTVREPDGLALSSRNAYLSPQERRAARALWRALEAAAGEARGGVRDARRLERAMEEVCRAEPLVRLQYAAVVDAETLQRLGELGDRPARALIAARVGETRLIDNAALP</sequence>
<name>PANC_RUBXD</name>
<feature type="chain" id="PRO_0000305539" description="Pantothenate synthetase">
    <location>
        <begin position="1"/>
        <end position="291"/>
    </location>
</feature>
<feature type="active site" description="Proton donor" evidence="1">
    <location>
        <position position="40"/>
    </location>
</feature>
<feature type="binding site" evidence="1">
    <location>
        <begin position="33"/>
        <end position="40"/>
    </location>
    <ligand>
        <name>ATP</name>
        <dbReference type="ChEBI" id="CHEBI:30616"/>
    </ligand>
</feature>
<feature type="binding site" evidence="1">
    <location>
        <position position="64"/>
    </location>
    <ligand>
        <name>(R)-pantoate</name>
        <dbReference type="ChEBI" id="CHEBI:15980"/>
    </ligand>
</feature>
<feature type="binding site" evidence="1">
    <location>
        <position position="64"/>
    </location>
    <ligand>
        <name>beta-alanine</name>
        <dbReference type="ChEBI" id="CHEBI:57966"/>
    </ligand>
</feature>
<feature type="binding site" evidence="1">
    <location>
        <begin position="157"/>
        <end position="160"/>
    </location>
    <ligand>
        <name>ATP</name>
        <dbReference type="ChEBI" id="CHEBI:30616"/>
    </ligand>
</feature>
<feature type="binding site" evidence="1">
    <location>
        <position position="163"/>
    </location>
    <ligand>
        <name>(R)-pantoate</name>
        <dbReference type="ChEBI" id="CHEBI:15980"/>
    </ligand>
</feature>
<feature type="binding site" evidence="1">
    <location>
        <position position="186"/>
    </location>
    <ligand>
        <name>ATP</name>
        <dbReference type="ChEBI" id="CHEBI:30616"/>
    </ligand>
</feature>
<feature type="binding site" evidence="1">
    <location>
        <begin position="194"/>
        <end position="197"/>
    </location>
    <ligand>
        <name>ATP</name>
        <dbReference type="ChEBI" id="CHEBI:30616"/>
    </ligand>
</feature>
<keyword id="KW-0067">ATP-binding</keyword>
<keyword id="KW-0963">Cytoplasm</keyword>
<keyword id="KW-0436">Ligase</keyword>
<keyword id="KW-0547">Nucleotide-binding</keyword>
<keyword id="KW-0566">Pantothenate biosynthesis</keyword>
<keyword id="KW-1185">Reference proteome</keyword>
<comment type="function">
    <text evidence="1">Catalyzes the condensation of pantoate with beta-alanine in an ATP-dependent reaction via a pantoyl-adenylate intermediate.</text>
</comment>
<comment type="catalytic activity">
    <reaction evidence="1">
        <text>(R)-pantoate + beta-alanine + ATP = (R)-pantothenate + AMP + diphosphate + H(+)</text>
        <dbReference type="Rhea" id="RHEA:10912"/>
        <dbReference type="ChEBI" id="CHEBI:15378"/>
        <dbReference type="ChEBI" id="CHEBI:15980"/>
        <dbReference type="ChEBI" id="CHEBI:29032"/>
        <dbReference type="ChEBI" id="CHEBI:30616"/>
        <dbReference type="ChEBI" id="CHEBI:33019"/>
        <dbReference type="ChEBI" id="CHEBI:57966"/>
        <dbReference type="ChEBI" id="CHEBI:456215"/>
        <dbReference type="EC" id="6.3.2.1"/>
    </reaction>
</comment>
<comment type="pathway">
    <text evidence="1">Cofactor biosynthesis; (R)-pantothenate biosynthesis; (R)-pantothenate from (R)-pantoate and beta-alanine: step 1/1.</text>
</comment>
<comment type="subunit">
    <text evidence="1">Homodimer.</text>
</comment>
<comment type="subcellular location">
    <subcellularLocation>
        <location evidence="1">Cytoplasm</location>
    </subcellularLocation>
</comment>
<comment type="miscellaneous">
    <text evidence="1">The reaction proceeds by a bi uni uni bi ping pong mechanism.</text>
</comment>
<comment type="similarity">
    <text evidence="1">Belongs to the pantothenate synthetase family.</text>
</comment>
<dbReference type="EC" id="6.3.2.1" evidence="1"/>
<dbReference type="EMBL" id="CP000386">
    <property type="protein sequence ID" value="ABG05396.1"/>
    <property type="molecule type" value="Genomic_DNA"/>
</dbReference>
<dbReference type="RefSeq" id="WP_011565409.1">
    <property type="nucleotide sequence ID" value="NC_008148.1"/>
</dbReference>
<dbReference type="SMR" id="Q1AT82"/>
<dbReference type="STRING" id="266117.Rxyl_2469"/>
<dbReference type="KEGG" id="rxy:Rxyl_2469"/>
<dbReference type="eggNOG" id="COG0414">
    <property type="taxonomic scope" value="Bacteria"/>
</dbReference>
<dbReference type="HOGENOM" id="CLU_047148_0_0_11"/>
<dbReference type="OrthoDB" id="9773087at2"/>
<dbReference type="PhylomeDB" id="Q1AT82"/>
<dbReference type="UniPathway" id="UPA00028">
    <property type="reaction ID" value="UER00005"/>
</dbReference>
<dbReference type="Proteomes" id="UP000006637">
    <property type="component" value="Chromosome"/>
</dbReference>
<dbReference type="GO" id="GO:0005829">
    <property type="term" value="C:cytosol"/>
    <property type="evidence" value="ECO:0007669"/>
    <property type="project" value="TreeGrafter"/>
</dbReference>
<dbReference type="GO" id="GO:0005524">
    <property type="term" value="F:ATP binding"/>
    <property type="evidence" value="ECO:0007669"/>
    <property type="project" value="UniProtKB-KW"/>
</dbReference>
<dbReference type="GO" id="GO:0004592">
    <property type="term" value="F:pantoate-beta-alanine ligase activity"/>
    <property type="evidence" value="ECO:0007669"/>
    <property type="project" value="UniProtKB-UniRule"/>
</dbReference>
<dbReference type="GO" id="GO:0015940">
    <property type="term" value="P:pantothenate biosynthetic process"/>
    <property type="evidence" value="ECO:0007669"/>
    <property type="project" value="UniProtKB-UniRule"/>
</dbReference>
<dbReference type="CDD" id="cd00560">
    <property type="entry name" value="PanC"/>
    <property type="match status" value="1"/>
</dbReference>
<dbReference type="Gene3D" id="3.40.50.620">
    <property type="entry name" value="HUPs"/>
    <property type="match status" value="1"/>
</dbReference>
<dbReference type="Gene3D" id="3.30.1300.10">
    <property type="entry name" value="Pantoate-beta-alanine ligase, C-terminal domain"/>
    <property type="match status" value="1"/>
</dbReference>
<dbReference type="HAMAP" id="MF_00158">
    <property type="entry name" value="PanC"/>
    <property type="match status" value="1"/>
</dbReference>
<dbReference type="InterPro" id="IPR004821">
    <property type="entry name" value="Cyt_trans-like"/>
</dbReference>
<dbReference type="InterPro" id="IPR003721">
    <property type="entry name" value="Pantoate_ligase"/>
</dbReference>
<dbReference type="InterPro" id="IPR042176">
    <property type="entry name" value="Pantoate_ligase_C"/>
</dbReference>
<dbReference type="InterPro" id="IPR014729">
    <property type="entry name" value="Rossmann-like_a/b/a_fold"/>
</dbReference>
<dbReference type="NCBIfam" id="TIGR00125">
    <property type="entry name" value="cyt_tran_rel"/>
    <property type="match status" value="1"/>
</dbReference>
<dbReference type="NCBIfam" id="TIGR00018">
    <property type="entry name" value="panC"/>
    <property type="match status" value="1"/>
</dbReference>
<dbReference type="PANTHER" id="PTHR21299">
    <property type="entry name" value="CYTIDYLATE KINASE/PANTOATE-BETA-ALANINE LIGASE"/>
    <property type="match status" value="1"/>
</dbReference>
<dbReference type="PANTHER" id="PTHR21299:SF1">
    <property type="entry name" value="PANTOATE--BETA-ALANINE LIGASE"/>
    <property type="match status" value="1"/>
</dbReference>
<dbReference type="Pfam" id="PF02569">
    <property type="entry name" value="Pantoate_ligase"/>
    <property type="match status" value="1"/>
</dbReference>
<dbReference type="SUPFAM" id="SSF52374">
    <property type="entry name" value="Nucleotidylyl transferase"/>
    <property type="match status" value="1"/>
</dbReference>